<feature type="signal peptide" evidence="1">
    <location>
        <begin position="1"/>
        <end position="19"/>
    </location>
</feature>
<feature type="chain" id="PRO_0000023281" description="Putative odorant-binding protein A5">
    <location>
        <begin position="20"/>
        <end position="210"/>
    </location>
</feature>
<feature type="sequence conflict" description="In Ref. 1." evidence="2" ref="1">
    <original>F</original>
    <variation>W</variation>
    <location>
        <position position="13"/>
    </location>
</feature>
<feature type="sequence conflict" description="In Ref. 1; AAC46472." evidence="2" ref="1">
    <original>W</original>
    <variation>R</variation>
    <location>
        <position position="105"/>
    </location>
</feature>
<name>OBA5_DROME</name>
<sequence>MKLPALHLLFLGFICLARSQDNDENVRRIMKEMEVIPEILDEPPRELLRIKYDNTIDIEEGKTYTPTELKFQPRLDWNADPESFYTVLMICPDAPNRENPMYRSWLHWLVVNVPGLDIMKGQPISEYFGPLPPKDSGIQRYLILVYQQSDKLDFDEKKMELSNADGHSNFDVMKFTQKYEMGSPVAGNIFQSRWDEYVPELMKTLYGVSE</sequence>
<proteinExistence type="evidence at transcript level"/>
<keyword id="KW-1185">Reference proteome</keyword>
<keyword id="KW-0964">Secreted</keyword>
<keyword id="KW-0732">Signal</keyword>
<comment type="subcellular location">
    <subcellularLocation>
        <location evidence="2">Secreted</location>
    </subcellularLocation>
    <text evidence="2">Secreted in the lumen of the sensilla.</text>
</comment>
<comment type="tissue specificity">
    <text>Cells at the bases of a few scattered sensilla on the posterior surface of the antenna.</text>
</comment>
<comment type="similarity">
    <text evidence="2">Belongs to the phosphatidylethanolamine-binding protein family.</text>
</comment>
<gene>
    <name type="primary">a5</name>
    <name type="ORF">CG5430</name>
</gene>
<reference key="1">
    <citation type="journal article" date="1994" name="Neuron">
        <title>Members of a family of Drosophila putative odorant-binding proteins are expressed in different subsets of olfactory hairs.</title>
        <authorList>
            <person name="Pikielny C.W."/>
            <person name="Hasan G."/>
            <person name="Rouyer F."/>
            <person name="Rosbash M."/>
        </authorList>
    </citation>
    <scope>NUCLEOTIDE SEQUENCE [MRNA]</scope>
    <source>
        <strain>Canton-S</strain>
        <tissue>Antenna</tissue>
    </source>
</reference>
<reference key="2">
    <citation type="journal article" date="2000" name="Science">
        <title>The genome sequence of Drosophila melanogaster.</title>
        <authorList>
            <person name="Adams M.D."/>
            <person name="Celniker S.E."/>
            <person name="Holt R.A."/>
            <person name="Evans C.A."/>
            <person name="Gocayne J.D."/>
            <person name="Amanatides P.G."/>
            <person name="Scherer S.E."/>
            <person name="Li P.W."/>
            <person name="Hoskins R.A."/>
            <person name="Galle R.F."/>
            <person name="George R.A."/>
            <person name="Lewis S.E."/>
            <person name="Richards S."/>
            <person name="Ashburner M."/>
            <person name="Henderson S.N."/>
            <person name="Sutton G.G."/>
            <person name="Wortman J.R."/>
            <person name="Yandell M.D."/>
            <person name="Zhang Q."/>
            <person name="Chen L.X."/>
            <person name="Brandon R.C."/>
            <person name="Rogers Y.-H.C."/>
            <person name="Blazej R.G."/>
            <person name="Champe M."/>
            <person name="Pfeiffer B.D."/>
            <person name="Wan K.H."/>
            <person name="Doyle C."/>
            <person name="Baxter E.G."/>
            <person name="Helt G."/>
            <person name="Nelson C.R."/>
            <person name="Miklos G.L.G."/>
            <person name="Abril J.F."/>
            <person name="Agbayani A."/>
            <person name="An H.-J."/>
            <person name="Andrews-Pfannkoch C."/>
            <person name="Baldwin D."/>
            <person name="Ballew R.M."/>
            <person name="Basu A."/>
            <person name="Baxendale J."/>
            <person name="Bayraktaroglu L."/>
            <person name="Beasley E.M."/>
            <person name="Beeson K.Y."/>
            <person name="Benos P.V."/>
            <person name="Berman B.P."/>
            <person name="Bhandari D."/>
            <person name="Bolshakov S."/>
            <person name="Borkova D."/>
            <person name="Botchan M.R."/>
            <person name="Bouck J."/>
            <person name="Brokstein P."/>
            <person name="Brottier P."/>
            <person name="Burtis K.C."/>
            <person name="Busam D.A."/>
            <person name="Butler H."/>
            <person name="Cadieu E."/>
            <person name="Center A."/>
            <person name="Chandra I."/>
            <person name="Cherry J.M."/>
            <person name="Cawley S."/>
            <person name="Dahlke C."/>
            <person name="Davenport L.B."/>
            <person name="Davies P."/>
            <person name="de Pablos B."/>
            <person name="Delcher A."/>
            <person name="Deng Z."/>
            <person name="Mays A.D."/>
            <person name="Dew I."/>
            <person name="Dietz S.M."/>
            <person name="Dodson K."/>
            <person name="Doup L.E."/>
            <person name="Downes M."/>
            <person name="Dugan-Rocha S."/>
            <person name="Dunkov B.C."/>
            <person name="Dunn P."/>
            <person name="Durbin K.J."/>
            <person name="Evangelista C.C."/>
            <person name="Ferraz C."/>
            <person name="Ferriera S."/>
            <person name="Fleischmann W."/>
            <person name="Fosler C."/>
            <person name="Gabrielian A.E."/>
            <person name="Garg N.S."/>
            <person name="Gelbart W.M."/>
            <person name="Glasser K."/>
            <person name="Glodek A."/>
            <person name="Gong F."/>
            <person name="Gorrell J.H."/>
            <person name="Gu Z."/>
            <person name="Guan P."/>
            <person name="Harris M."/>
            <person name="Harris N.L."/>
            <person name="Harvey D.A."/>
            <person name="Heiman T.J."/>
            <person name="Hernandez J.R."/>
            <person name="Houck J."/>
            <person name="Hostin D."/>
            <person name="Houston K.A."/>
            <person name="Howland T.J."/>
            <person name="Wei M.-H."/>
            <person name="Ibegwam C."/>
            <person name="Jalali M."/>
            <person name="Kalush F."/>
            <person name="Karpen G.H."/>
            <person name="Ke Z."/>
            <person name="Kennison J.A."/>
            <person name="Ketchum K.A."/>
            <person name="Kimmel B.E."/>
            <person name="Kodira C.D."/>
            <person name="Kraft C.L."/>
            <person name="Kravitz S."/>
            <person name="Kulp D."/>
            <person name="Lai Z."/>
            <person name="Lasko P."/>
            <person name="Lei Y."/>
            <person name="Levitsky A.A."/>
            <person name="Li J.H."/>
            <person name="Li Z."/>
            <person name="Liang Y."/>
            <person name="Lin X."/>
            <person name="Liu X."/>
            <person name="Mattei B."/>
            <person name="McIntosh T.C."/>
            <person name="McLeod M.P."/>
            <person name="McPherson D."/>
            <person name="Merkulov G."/>
            <person name="Milshina N.V."/>
            <person name="Mobarry C."/>
            <person name="Morris J."/>
            <person name="Moshrefi A."/>
            <person name="Mount S.M."/>
            <person name="Moy M."/>
            <person name="Murphy B."/>
            <person name="Murphy L."/>
            <person name="Muzny D.M."/>
            <person name="Nelson D.L."/>
            <person name="Nelson D.R."/>
            <person name="Nelson K.A."/>
            <person name="Nixon K."/>
            <person name="Nusskern D.R."/>
            <person name="Pacleb J.M."/>
            <person name="Palazzolo M."/>
            <person name="Pittman G.S."/>
            <person name="Pan S."/>
            <person name="Pollard J."/>
            <person name="Puri V."/>
            <person name="Reese M.G."/>
            <person name="Reinert K."/>
            <person name="Remington K."/>
            <person name="Saunders R.D.C."/>
            <person name="Scheeler F."/>
            <person name="Shen H."/>
            <person name="Shue B.C."/>
            <person name="Siden-Kiamos I."/>
            <person name="Simpson M."/>
            <person name="Skupski M.P."/>
            <person name="Smith T.J."/>
            <person name="Spier E."/>
            <person name="Spradling A.C."/>
            <person name="Stapleton M."/>
            <person name="Strong R."/>
            <person name="Sun E."/>
            <person name="Svirskas R."/>
            <person name="Tector C."/>
            <person name="Turner R."/>
            <person name="Venter E."/>
            <person name="Wang A.H."/>
            <person name="Wang X."/>
            <person name="Wang Z.-Y."/>
            <person name="Wassarman D.A."/>
            <person name="Weinstock G.M."/>
            <person name="Weissenbach J."/>
            <person name="Williams S.M."/>
            <person name="Woodage T."/>
            <person name="Worley K.C."/>
            <person name="Wu D."/>
            <person name="Yang S."/>
            <person name="Yao Q.A."/>
            <person name="Ye J."/>
            <person name="Yeh R.-F."/>
            <person name="Zaveri J.S."/>
            <person name="Zhan M."/>
            <person name="Zhang G."/>
            <person name="Zhao Q."/>
            <person name="Zheng L."/>
            <person name="Zheng X.H."/>
            <person name="Zhong F.N."/>
            <person name="Zhong W."/>
            <person name="Zhou X."/>
            <person name="Zhu S.C."/>
            <person name="Zhu X."/>
            <person name="Smith H.O."/>
            <person name="Gibbs R.A."/>
            <person name="Myers E.W."/>
            <person name="Rubin G.M."/>
            <person name="Venter J.C."/>
        </authorList>
    </citation>
    <scope>NUCLEOTIDE SEQUENCE [LARGE SCALE GENOMIC DNA]</scope>
    <source>
        <strain>Berkeley</strain>
    </source>
</reference>
<reference key="3">
    <citation type="journal article" date="2002" name="Genome Biol.">
        <title>Annotation of the Drosophila melanogaster euchromatic genome: a systematic review.</title>
        <authorList>
            <person name="Misra S."/>
            <person name="Crosby M.A."/>
            <person name="Mungall C.J."/>
            <person name="Matthews B.B."/>
            <person name="Campbell K.S."/>
            <person name="Hradecky P."/>
            <person name="Huang Y."/>
            <person name="Kaminker J.S."/>
            <person name="Millburn G.H."/>
            <person name="Prochnik S.E."/>
            <person name="Smith C.D."/>
            <person name="Tupy J.L."/>
            <person name="Whitfield E.J."/>
            <person name="Bayraktaroglu L."/>
            <person name="Berman B.P."/>
            <person name="Bettencourt B.R."/>
            <person name="Celniker S.E."/>
            <person name="de Grey A.D.N.J."/>
            <person name="Drysdale R.A."/>
            <person name="Harris N.L."/>
            <person name="Richter J."/>
            <person name="Russo S."/>
            <person name="Schroeder A.J."/>
            <person name="Shu S.Q."/>
            <person name="Stapleton M."/>
            <person name="Yamada C."/>
            <person name="Ashburner M."/>
            <person name="Gelbart W.M."/>
            <person name="Rubin G.M."/>
            <person name="Lewis S.E."/>
        </authorList>
    </citation>
    <scope>GENOME REANNOTATION</scope>
    <source>
        <strain>Berkeley</strain>
    </source>
</reference>
<evidence type="ECO:0000255" key="1"/>
<evidence type="ECO:0000305" key="2"/>
<organism>
    <name type="scientific">Drosophila melanogaster</name>
    <name type="common">Fruit fly</name>
    <dbReference type="NCBI Taxonomy" id="7227"/>
    <lineage>
        <taxon>Eukaryota</taxon>
        <taxon>Metazoa</taxon>
        <taxon>Ecdysozoa</taxon>
        <taxon>Arthropoda</taxon>
        <taxon>Hexapoda</taxon>
        <taxon>Insecta</taxon>
        <taxon>Pterygota</taxon>
        <taxon>Neoptera</taxon>
        <taxon>Endopterygota</taxon>
        <taxon>Diptera</taxon>
        <taxon>Brachycera</taxon>
        <taxon>Muscomorpha</taxon>
        <taxon>Ephydroidea</taxon>
        <taxon>Drosophilidae</taxon>
        <taxon>Drosophila</taxon>
        <taxon>Sophophora</taxon>
    </lineage>
</organism>
<dbReference type="EMBL" id="U05243">
    <property type="protein sequence ID" value="AAC46472.1"/>
    <property type="molecule type" value="mRNA"/>
</dbReference>
<dbReference type="EMBL" id="AE014134">
    <property type="protein sequence ID" value="AAF51385.1"/>
    <property type="molecule type" value="Genomic_DNA"/>
</dbReference>
<dbReference type="RefSeq" id="NP_476998.1">
    <property type="nucleotide sequence ID" value="NM_057650.3"/>
</dbReference>
<dbReference type="SMR" id="P54185"/>
<dbReference type="BioGRID" id="59566">
    <property type="interactions" value="2"/>
</dbReference>
<dbReference type="DIP" id="DIP-19357N"/>
<dbReference type="FunCoup" id="P54185">
    <property type="interactions" value="2"/>
</dbReference>
<dbReference type="IntAct" id="P54185">
    <property type="interactions" value="1"/>
</dbReference>
<dbReference type="STRING" id="7227.FBpp0077588"/>
<dbReference type="PaxDb" id="7227-FBpp0077588"/>
<dbReference type="EnsemblMetazoa" id="FBtr0077922">
    <property type="protein sequence ID" value="FBpp0077588"/>
    <property type="gene ID" value="FBgn0011294"/>
</dbReference>
<dbReference type="GeneID" id="33317"/>
<dbReference type="KEGG" id="dme:Dmel_CG5430"/>
<dbReference type="AGR" id="FB:FBgn0011294"/>
<dbReference type="CTD" id="33317"/>
<dbReference type="FlyBase" id="FBgn0011294">
    <property type="gene designation" value="a5"/>
</dbReference>
<dbReference type="VEuPathDB" id="VectorBase:FBgn0011294"/>
<dbReference type="eggNOG" id="KOG3346">
    <property type="taxonomic scope" value="Eukaryota"/>
</dbReference>
<dbReference type="GeneTree" id="ENSGT00940000170081"/>
<dbReference type="HOGENOM" id="CLU_043994_5_1_1"/>
<dbReference type="InParanoid" id="P54185"/>
<dbReference type="OMA" id="PNRENPM"/>
<dbReference type="OrthoDB" id="2506647at2759"/>
<dbReference type="PhylomeDB" id="P54185"/>
<dbReference type="BioGRID-ORCS" id="33317">
    <property type="hits" value="0 hits in 1 CRISPR screen"/>
</dbReference>
<dbReference type="GenomeRNAi" id="33317"/>
<dbReference type="PRO" id="PR:P54185"/>
<dbReference type="Proteomes" id="UP000000803">
    <property type="component" value="Chromosome 2L"/>
</dbReference>
<dbReference type="Bgee" id="FBgn0011294">
    <property type="expression patterns" value="Expressed in antennal olfactory receptor neuron of coeloconic sensillum in antenna and 30 other cell types or tissues"/>
</dbReference>
<dbReference type="GO" id="GO:0005576">
    <property type="term" value="C:extracellular region"/>
    <property type="evidence" value="ECO:0007669"/>
    <property type="project" value="UniProtKB-SubCell"/>
</dbReference>
<dbReference type="CDD" id="cd00866">
    <property type="entry name" value="PEBP_euk"/>
    <property type="match status" value="1"/>
</dbReference>
<dbReference type="Gene3D" id="3.90.280.10">
    <property type="entry name" value="PEBP-like"/>
    <property type="match status" value="1"/>
</dbReference>
<dbReference type="InterPro" id="IPR008914">
    <property type="entry name" value="PEBP"/>
</dbReference>
<dbReference type="InterPro" id="IPR036610">
    <property type="entry name" value="PEBP-like_sf"/>
</dbReference>
<dbReference type="InterPro" id="IPR035810">
    <property type="entry name" value="PEBP_euk"/>
</dbReference>
<dbReference type="InterPro" id="IPR001858">
    <property type="entry name" value="Phosphatidylethanolamine-bd_CS"/>
</dbReference>
<dbReference type="PANTHER" id="PTHR11362">
    <property type="entry name" value="PHOSPHATIDYLETHANOLAMINE-BINDING PROTEIN"/>
    <property type="match status" value="1"/>
</dbReference>
<dbReference type="PANTHER" id="PTHR11362:SF82">
    <property type="entry name" value="PHOSPHATIDYLETHANOLAMINE-BINDING PROTEIN 4"/>
    <property type="match status" value="1"/>
</dbReference>
<dbReference type="Pfam" id="PF01161">
    <property type="entry name" value="PBP"/>
    <property type="match status" value="1"/>
</dbReference>
<dbReference type="SUPFAM" id="SSF49777">
    <property type="entry name" value="PEBP-like"/>
    <property type="match status" value="1"/>
</dbReference>
<dbReference type="PROSITE" id="PS01220">
    <property type="entry name" value="PBP"/>
    <property type="match status" value="1"/>
</dbReference>
<accession>P54185</accession>
<accession>Q9VPZ9</accession>
<protein>
    <recommendedName>
        <fullName>Putative odorant-binding protein A5</fullName>
    </recommendedName>
    <alternativeName>
        <fullName>Antennal protein 5</fullName>
    </alternativeName>
</protein>